<protein>
    <recommendedName>
        <fullName evidence="1">Holliday junction branch migration complex subunit RuvB</fullName>
        <ecNumber evidence="1">3.6.4.-</ecNumber>
    </recommendedName>
</protein>
<reference key="1">
    <citation type="journal article" date="2006" name="Genome Res.">
        <title>Skewed genomic variability in strains of the toxigenic bacterial pathogen, Clostridium perfringens.</title>
        <authorList>
            <person name="Myers G.S.A."/>
            <person name="Rasko D.A."/>
            <person name="Cheung J.K."/>
            <person name="Ravel J."/>
            <person name="Seshadri R."/>
            <person name="DeBoy R.T."/>
            <person name="Ren Q."/>
            <person name="Varga J."/>
            <person name="Awad M.M."/>
            <person name="Brinkac L.M."/>
            <person name="Daugherty S.C."/>
            <person name="Haft D.H."/>
            <person name="Dodson R.J."/>
            <person name="Madupu R."/>
            <person name="Nelson W.C."/>
            <person name="Rosovitz M.J."/>
            <person name="Sullivan S.A."/>
            <person name="Khouri H."/>
            <person name="Dimitrov G.I."/>
            <person name="Watkins K.L."/>
            <person name="Mulligan S."/>
            <person name="Benton J."/>
            <person name="Radune D."/>
            <person name="Fisher D.J."/>
            <person name="Atkins H.S."/>
            <person name="Hiscox T."/>
            <person name="Jost B.H."/>
            <person name="Billington S.J."/>
            <person name="Songer J.G."/>
            <person name="McClane B.A."/>
            <person name="Titball R.W."/>
            <person name="Rood J.I."/>
            <person name="Melville S.B."/>
            <person name="Paulsen I.T."/>
        </authorList>
    </citation>
    <scope>NUCLEOTIDE SEQUENCE [LARGE SCALE GENOMIC DNA]</scope>
    <source>
        <strain>ATCC 13124 / DSM 756 / JCM 1290 / NCIMB 6125 / NCTC 8237 / S 107 / Type A</strain>
    </source>
</reference>
<sequence length="346" mass="38936">MSERLVTSNEIGIDSTNEYSLRPEKINEYIGQDKVKERLNIFIKAAQRREEALDHVILYGPPGLGKTTLANIIANEMGGNLKITSGPAIERAGDLAAILTTLNTNDVLFIDEIHRLNRSVEEILYPAMEDYVLDIIIGKGAASKSIRLDLPKFTLIGATTRIGMLSSPLRDRFGVLCSMEYYTDEQLKEIIIRSAEILGCHITEEGAFEIAKRSRGTPRIANRLLKRVRDFAEVLYDNEITEEAAKKSLEILEVDGEGFDRIDNKILEAIIDNFNGGPVGIETLAYFVGEELDTIEDVYEPYLLQKGFIVRTPRGRMATDKAYKHLGRVRFNESKIDSKQCTLFEK</sequence>
<name>RUVB_CLOP1</name>
<proteinExistence type="inferred from homology"/>
<feature type="chain" id="PRO_1000001393" description="Holliday junction branch migration complex subunit RuvB">
    <location>
        <begin position="1"/>
        <end position="346"/>
    </location>
</feature>
<feature type="region of interest" description="Large ATPase domain (RuvB-L)" evidence="1">
    <location>
        <begin position="1"/>
        <end position="182"/>
    </location>
</feature>
<feature type="region of interest" description="Small ATPAse domain (RuvB-S)" evidence="1">
    <location>
        <begin position="183"/>
        <end position="253"/>
    </location>
</feature>
<feature type="region of interest" description="Head domain (RuvB-H)" evidence="1">
    <location>
        <begin position="256"/>
        <end position="346"/>
    </location>
</feature>
<feature type="binding site" evidence="1">
    <location>
        <position position="21"/>
    </location>
    <ligand>
        <name>ATP</name>
        <dbReference type="ChEBI" id="CHEBI:30616"/>
    </ligand>
</feature>
<feature type="binding site" evidence="1">
    <location>
        <position position="22"/>
    </location>
    <ligand>
        <name>ATP</name>
        <dbReference type="ChEBI" id="CHEBI:30616"/>
    </ligand>
</feature>
<feature type="binding site" evidence="1">
    <location>
        <position position="63"/>
    </location>
    <ligand>
        <name>ATP</name>
        <dbReference type="ChEBI" id="CHEBI:30616"/>
    </ligand>
</feature>
<feature type="binding site" evidence="1">
    <location>
        <position position="66"/>
    </location>
    <ligand>
        <name>ATP</name>
        <dbReference type="ChEBI" id="CHEBI:30616"/>
    </ligand>
</feature>
<feature type="binding site" evidence="1">
    <location>
        <position position="67"/>
    </location>
    <ligand>
        <name>ATP</name>
        <dbReference type="ChEBI" id="CHEBI:30616"/>
    </ligand>
</feature>
<feature type="binding site" evidence="1">
    <location>
        <position position="67"/>
    </location>
    <ligand>
        <name>Mg(2+)</name>
        <dbReference type="ChEBI" id="CHEBI:18420"/>
    </ligand>
</feature>
<feature type="binding site" evidence="1">
    <location>
        <position position="68"/>
    </location>
    <ligand>
        <name>ATP</name>
        <dbReference type="ChEBI" id="CHEBI:30616"/>
    </ligand>
</feature>
<feature type="binding site" evidence="1">
    <location>
        <begin position="129"/>
        <end position="131"/>
    </location>
    <ligand>
        <name>ATP</name>
        <dbReference type="ChEBI" id="CHEBI:30616"/>
    </ligand>
</feature>
<feature type="binding site" evidence="1">
    <location>
        <position position="172"/>
    </location>
    <ligand>
        <name>ATP</name>
        <dbReference type="ChEBI" id="CHEBI:30616"/>
    </ligand>
</feature>
<feature type="binding site" evidence="1">
    <location>
        <position position="182"/>
    </location>
    <ligand>
        <name>ATP</name>
        <dbReference type="ChEBI" id="CHEBI:30616"/>
    </ligand>
</feature>
<feature type="binding site" evidence="1">
    <location>
        <position position="219"/>
    </location>
    <ligand>
        <name>ATP</name>
        <dbReference type="ChEBI" id="CHEBI:30616"/>
    </ligand>
</feature>
<feature type="binding site" evidence="1">
    <location>
        <position position="311"/>
    </location>
    <ligand>
        <name>DNA</name>
        <dbReference type="ChEBI" id="CHEBI:16991"/>
    </ligand>
</feature>
<feature type="binding site" evidence="1">
    <location>
        <position position="316"/>
    </location>
    <ligand>
        <name>DNA</name>
        <dbReference type="ChEBI" id="CHEBI:16991"/>
    </ligand>
</feature>
<accession>Q0TP13</accession>
<evidence type="ECO:0000255" key="1">
    <source>
        <dbReference type="HAMAP-Rule" id="MF_00016"/>
    </source>
</evidence>
<gene>
    <name evidence="1" type="primary">ruvB</name>
    <name type="ordered locus">CPF_2203</name>
</gene>
<dbReference type="EC" id="3.6.4.-" evidence="1"/>
<dbReference type="EMBL" id="CP000246">
    <property type="protein sequence ID" value="ABG83567.1"/>
    <property type="molecule type" value="Genomic_DNA"/>
</dbReference>
<dbReference type="RefSeq" id="WP_003451099.1">
    <property type="nucleotide sequence ID" value="NC_008261.1"/>
</dbReference>
<dbReference type="SMR" id="Q0TP13"/>
<dbReference type="STRING" id="195103.CPF_2203"/>
<dbReference type="PaxDb" id="195103-CPF_2203"/>
<dbReference type="GeneID" id="93001516"/>
<dbReference type="KEGG" id="cpf:CPF_2203"/>
<dbReference type="eggNOG" id="COG2255">
    <property type="taxonomic scope" value="Bacteria"/>
</dbReference>
<dbReference type="HOGENOM" id="CLU_055599_1_0_9"/>
<dbReference type="Proteomes" id="UP000001823">
    <property type="component" value="Chromosome"/>
</dbReference>
<dbReference type="GO" id="GO:0005737">
    <property type="term" value="C:cytoplasm"/>
    <property type="evidence" value="ECO:0007669"/>
    <property type="project" value="UniProtKB-SubCell"/>
</dbReference>
<dbReference type="GO" id="GO:0048476">
    <property type="term" value="C:Holliday junction resolvase complex"/>
    <property type="evidence" value="ECO:0007669"/>
    <property type="project" value="UniProtKB-UniRule"/>
</dbReference>
<dbReference type="GO" id="GO:0005524">
    <property type="term" value="F:ATP binding"/>
    <property type="evidence" value="ECO:0007669"/>
    <property type="project" value="UniProtKB-UniRule"/>
</dbReference>
<dbReference type="GO" id="GO:0016887">
    <property type="term" value="F:ATP hydrolysis activity"/>
    <property type="evidence" value="ECO:0007669"/>
    <property type="project" value="InterPro"/>
</dbReference>
<dbReference type="GO" id="GO:0000400">
    <property type="term" value="F:four-way junction DNA binding"/>
    <property type="evidence" value="ECO:0007669"/>
    <property type="project" value="UniProtKB-UniRule"/>
</dbReference>
<dbReference type="GO" id="GO:0009378">
    <property type="term" value="F:four-way junction helicase activity"/>
    <property type="evidence" value="ECO:0007669"/>
    <property type="project" value="InterPro"/>
</dbReference>
<dbReference type="GO" id="GO:0006310">
    <property type="term" value="P:DNA recombination"/>
    <property type="evidence" value="ECO:0007669"/>
    <property type="project" value="UniProtKB-UniRule"/>
</dbReference>
<dbReference type="GO" id="GO:0006281">
    <property type="term" value="P:DNA repair"/>
    <property type="evidence" value="ECO:0007669"/>
    <property type="project" value="UniProtKB-UniRule"/>
</dbReference>
<dbReference type="CDD" id="cd00009">
    <property type="entry name" value="AAA"/>
    <property type="match status" value="1"/>
</dbReference>
<dbReference type="Gene3D" id="1.10.8.60">
    <property type="match status" value="1"/>
</dbReference>
<dbReference type="Gene3D" id="3.40.50.300">
    <property type="entry name" value="P-loop containing nucleotide triphosphate hydrolases"/>
    <property type="match status" value="1"/>
</dbReference>
<dbReference type="Gene3D" id="1.10.10.10">
    <property type="entry name" value="Winged helix-like DNA-binding domain superfamily/Winged helix DNA-binding domain"/>
    <property type="match status" value="1"/>
</dbReference>
<dbReference type="HAMAP" id="MF_00016">
    <property type="entry name" value="DNA_HJ_migration_RuvB"/>
    <property type="match status" value="1"/>
</dbReference>
<dbReference type="InterPro" id="IPR003593">
    <property type="entry name" value="AAA+_ATPase"/>
</dbReference>
<dbReference type="InterPro" id="IPR041445">
    <property type="entry name" value="AAA_lid_4"/>
</dbReference>
<dbReference type="InterPro" id="IPR004605">
    <property type="entry name" value="DNA_helicase_Holl-junc_RuvB"/>
</dbReference>
<dbReference type="InterPro" id="IPR027417">
    <property type="entry name" value="P-loop_NTPase"/>
</dbReference>
<dbReference type="InterPro" id="IPR008824">
    <property type="entry name" value="RuvB-like_N"/>
</dbReference>
<dbReference type="InterPro" id="IPR008823">
    <property type="entry name" value="RuvB_C"/>
</dbReference>
<dbReference type="InterPro" id="IPR036388">
    <property type="entry name" value="WH-like_DNA-bd_sf"/>
</dbReference>
<dbReference type="InterPro" id="IPR036390">
    <property type="entry name" value="WH_DNA-bd_sf"/>
</dbReference>
<dbReference type="NCBIfam" id="NF000868">
    <property type="entry name" value="PRK00080.1"/>
    <property type="match status" value="1"/>
</dbReference>
<dbReference type="NCBIfam" id="TIGR00635">
    <property type="entry name" value="ruvB"/>
    <property type="match status" value="1"/>
</dbReference>
<dbReference type="PANTHER" id="PTHR42848">
    <property type="match status" value="1"/>
</dbReference>
<dbReference type="PANTHER" id="PTHR42848:SF1">
    <property type="entry name" value="HOLLIDAY JUNCTION BRANCH MIGRATION COMPLEX SUBUNIT RUVB"/>
    <property type="match status" value="1"/>
</dbReference>
<dbReference type="Pfam" id="PF17864">
    <property type="entry name" value="AAA_lid_4"/>
    <property type="match status" value="1"/>
</dbReference>
<dbReference type="Pfam" id="PF05491">
    <property type="entry name" value="RuvB_C"/>
    <property type="match status" value="1"/>
</dbReference>
<dbReference type="Pfam" id="PF05496">
    <property type="entry name" value="RuvB_N"/>
    <property type="match status" value="1"/>
</dbReference>
<dbReference type="SMART" id="SM00382">
    <property type="entry name" value="AAA"/>
    <property type="match status" value="1"/>
</dbReference>
<dbReference type="SUPFAM" id="SSF52540">
    <property type="entry name" value="P-loop containing nucleoside triphosphate hydrolases"/>
    <property type="match status" value="1"/>
</dbReference>
<dbReference type="SUPFAM" id="SSF46785">
    <property type="entry name" value="Winged helix' DNA-binding domain"/>
    <property type="match status" value="1"/>
</dbReference>
<comment type="function">
    <text evidence="1">The RuvA-RuvB-RuvC complex processes Holliday junction (HJ) DNA during genetic recombination and DNA repair, while the RuvA-RuvB complex plays an important role in the rescue of blocked DNA replication forks via replication fork reversal (RFR). RuvA specifically binds to HJ cruciform DNA, conferring on it an open structure. The RuvB hexamer acts as an ATP-dependent pump, pulling dsDNA into and through the RuvAB complex. RuvB forms 2 homohexamers on either side of HJ DNA bound by 1 or 2 RuvA tetramers; 4 subunits per hexamer contact DNA at a time. Coordinated motions by a converter formed by DNA-disengaged RuvB subunits stimulates ATP hydrolysis and nucleotide exchange. Immobilization of the converter enables RuvB to convert the ATP-contained energy into a lever motion, pulling 2 nucleotides of DNA out of the RuvA tetramer per ATP hydrolyzed, thus driving DNA branch migration. The RuvB motors rotate together with the DNA substrate, which together with the progressing nucleotide cycle form the mechanistic basis for DNA recombination by continuous HJ branch migration. Branch migration allows RuvC to scan DNA until it finds its consensus sequence, where it cleaves and resolves cruciform DNA.</text>
</comment>
<comment type="catalytic activity">
    <reaction evidence="1">
        <text>ATP + H2O = ADP + phosphate + H(+)</text>
        <dbReference type="Rhea" id="RHEA:13065"/>
        <dbReference type="ChEBI" id="CHEBI:15377"/>
        <dbReference type="ChEBI" id="CHEBI:15378"/>
        <dbReference type="ChEBI" id="CHEBI:30616"/>
        <dbReference type="ChEBI" id="CHEBI:43474"/>
        <dbReference type="ChEBI" id="CHEBI:456216"/>
    </reaction>
</comment>
<comment type="subunit">
    <text evidence="1">Homohexamer. Forms an RuvA(8)-RuvB(12)-Holliday junction (HJ) complex. HJ DNA is sandwiched between 2 RuvA tetramers; dsDNA enters through RuvA and exits via RuvB. An RuvB hexamer assembles on each DNA strand where it exits the tetramer. Each RuvB hexamer is contacted by two RuvA subunits (via domain III) on 2 adjacent RuvB subunits; this complex drives branch migration. In the full resolvosome a probable DNA-RuvA(4)-RuvB(12)-RuvC(2) complex forms which resolves the HJ.</text>
</comment>
<comment type="subcellular location">
    <subcellularLocation>
        <location evidence="1">Cytoplasm</location>
    </subcellularLocation>
</comment>
<comment type="domain">
    <text evidence="1">Has 3 domains, the large (RuvB-L) and small ATPase (RuvB-S) domains and the C-terminal head (RuvB-H) domain. The head domain binds DNA, while the ATPase domains jointly bind ATP, ADP or are empty depending on the state of the subunit in the translocation cycle. During a single DNA translocation step the structure of each domain remains the same, but their relative positions change.</text>
</comment>
<comment type="similarity">
    <text evidence="1">Belongs to the RuvB family.</text>
</comment>
<organism>
    <name type="scientific">Clostridium perfringens (strain ATCC 13124 / DSM 756 / JCM 1290 / NCIMB 6125 / NCTC 8237 / Type A)</name>
    <dbReference type="NCBI Taxonomy" id="195103"/>
    <lineage>
        <taxon>Bacteria</taxon>
        <taxon>Bacillati</taxon>
        <taxon>Bacillota</taxon>
        <taxon>Clostridia</taxon>
        <taxon>Eubacteriales</taxon>
        <taxon>Clostridiaceae</taxon>
        <taxon>Clostridium</taxon>
    </lineage>
</organism>
<keyword id="KW-0067">ATP-binding</keyword>
<keyword id="KW-0963">Cytoplasm</keyword>
<keyword id="KW-0227">DNA damage</keyword>
<keyword id="KW-0233">DNA recombination</keyword>
<keyword id="KW-0234">DNA repair</keyword>
<keyword id="KW-0238">DNA-binding</keyword>
<keyword id="KW-0378">Hydrolase</keyword>
<keyword id="KW-0547">Nucleotide-binding</keyword>